<feature type="chain" id="PRO_0000104690" description="Large ribosomal subunit protein uL15">
    <location>
        <begin position="1"/>
        <end position="156"/>
    </location>
</feature>
<feature type="region of interest" description="Disordered" evidence="2">
    <location>
        <begin position="1"/>
        <end position="44"/>
    </location>
</feature>
<feature type="compositionally biased region" description="Basic and acidic residues" evidence="2">
    <location>
        <begin position="1"/>
        <end position="11"/>
    </location>
</feature>
<feature type="compositionally biased region" description="Gly residues" evidence="2">
    <location>
        <begin position="21"/>
        <end position="35"/>
    </location>
</feature>
<comment type="function">
    <text evidence="1">Binds to the 23S rRNA.</text>
</comment>
<comment type="subunit">
    <text evidence="1">Part of the 50S ribosomal subunit.</text>
</comment>
<comment type="similarity">
    <text evidence="1">Belongs to the universal ribosomal protein uL15 family.</text>
</comment>
<proteinExistence type="inferred from homology"/>
<accession>Q57CS7</accession>
<evidence type="ECO:0000255" key="1">
    <source>
        <dbReference type="HAMAP-Rule" id="MF_01341"/>
    </source>
</evidence>
<evidence type="ECO:0000256" key="2">
    <source>
        <dbReference type="SAM" id="MobiDB-lite"/>
    </source>
</evidence>
<evidence type="ECO:0000305" key="3"/>
<sequence length="156" mass="16245">MKLNDLRDKPGSVKARKRVGRGIGSGTGKTGGRGVKGQKSRSGVSINGFEGGQMPIYRRLPKRGFTNIFAKSFNVVSLGRIQAAIDAGKLDAKAVVNLDSLKAAGVIRRAKDGVRILSDGELKAKVAFEVAGASKAAVEKIEKAGGSIKLPEAAAE</sequence>
<name>RL15_BRUAB</name>
<reference key="1">
    <citation type="journal article" date="2005" name="J. Bacteriol.">
        <title>Completion of the genome sequence of Brucella abortus and comparison to the highly similar genomes of Brucella melitensis and Brucella suis.</title>
        <authorList>
            <person name="Halling S.M."/>
            <person name="Peterson-Burch B.D."/>
            <person name="Bricker B.J."/>
            <person name="Zuerner R.L."/>
            <person name="Qing Z."/>
            <person name="Li L.-L."/>
            <person name="Kapur V."/>
            <person name="Alt D.P."/>
            <person name="Olsen S.C."/>
        </authorList>
    </citation>
    <scope>NUCLEOTIDE SEQUENCE [LARGE SCALE GENOMIC DNA]</scope>
    <source>
        <strain>9-941</strain>
    </source>
</reference>
<gene>
    <name evidence="1" type="primary">rplO</name>
    <name type="ordered locus">BruAb1_1219</name>
</gene>
<dbReference type="EMBL" id="AE017223">
    <property type="protein sequence ID" value="AAX74557.1"/>
    <property type="molecule type" value="Genomic_DNA"/>
</dbReference>
<dbReference type="RefSeq" id="WP_002964343.1">
    <property type="nucleotide sequence ID" value="NC_006932.1"/>
</dbReference>
<dbReference type="SMR" id="Q57CS7"/>
<dbReference type="EnsemblBacteria" id="AAX74557">
    <property type="protein sequence ID" value="AAX74557"/>
    <property type="gene ID" value="BruAb1_1219"/>
</dbReference>
<dbReference type="GeneID" id="97533543"/>
<dbReference type="KEGG" id="bmb:BruAb1_1219"/>
<dbReference type="HOGENOM" id="CLU_055188_4_0_5"/>
<dbReference type="Proteomes" id="UP000000540">
    <property type="component" value="Chromosome I"/>
</dbReference>
<dbReference type="GO" id="GO:0022625">
    <property type="term" value="C:cytosolic large ribosomal subunit"/>
    <property type="evidence" value="ECO:0007669"/>
    <property type="project" value="TreeGrafter"/>
</dbReference>
<dbReference type="GO" id="GO:0019843">
    <property type="term" value="F:rRNA binding"/>
    <property type="evidence" value="ECO:0007669"/>
    <property type="project" value="UniProtKB-UniRule"/>
</dbReference>
<dbReference type="GO" id="GO:0003735">
    <property type="term" value="F:structural constituent of ribosome"/>
    <property type="evidence" value="ECO:0007669"/>
    <property type="project" value="InterPro"/>
</dbReference>
<dbReference type="GO" id="GO:0006412">
    <property type="term" value="P:translation"/>
    <property type="evidence" value="ECO:0007669"/>
    <property type="project" value="UniProtKB-UniRule"/>
</dbReference>
<dbReference type="Gene3D" id="3.100.10.10">
    <property type="match status" value="1"/>
</dbReference>
<dbReference type="HAMAP" id="MF_01341">
    <property type="entry name" value="Ribosomal_uL15"/>
    <property type="match status" value="1"/>
</dbReference>
<dbReference type="InterPro" id="IPR030878">
    <property type="entry name" value="Ribosomal_uL15"/>
</dbReference>
<dbReference type="InterPro" id="IPR021131">
    <property type="entry name" value="Ribosomal_uL15/eL18"/>
</dbReference>
<dbReference type="InterPro" id="IPR036227">
    <property type="entry name" value="Ribosomal_uL15/eL18_sf"/>
</dbReference>
<dbReference type="InterPro" id="IPR005749">
    <property type="entry name" value="Ribosomal_uL15_bac-type"/>
</dbReference>
<dbReference type="InterPro" id="IPR001196">
    <property type="entry name" value="Ribosomal_uL15_CS"/>
</dbReference>
<dbReference type="NCBIfam" id="TIGR01071">
    <property type="entry name" value="rplO_bact"/>
    <property type="match status" value="1"/>
</dbReference>
<dbReference type="PANTHER" id="PTHR12934">
    <property type="entry name" value="50S RIBOSOMAL PROTEIN L15"/>
    <property type="match status" value="1"/>
</dbReference>
<dbReference type="PANTHER" id="PTHR12934:SF11">
    <property type="entry name" value="LARGE RIBOSOMAL SUBUNIT PROTEIN UL15M"/>
    <property type="match status" value="1"/>
</dbReference>
<dbReference type="Pfam" id="PF00828">
    <property type="entry name" value="Ribosomal_L27A"/>
    <property type="match status" value="1"/>
</dbReference>
<dbReference type="SUPFAM" id="SSF52080">
    <property type="entry name" value="Ribosomal proteins L15p and L18e"/>
    <property type="match status" value="1"/>
</dbReference>
<dbReference type="PROSITE" id="PS00475">
    <property type="entry name" value="RIBOSOMAL_L15"/>
    <property type="match status" value="1"/>
</dbReference>
<organism>
    <name type="scientific">Brucella abortus biovar 1 (strain 9-941)</name>
    <dbReference type="NCBI Taxonomy" id="262698"/>
    <lineage>
        <taxon>Bacteria</taxon>
        <taxon>Pseudomonadati</taxon>
        <taxon>Pseudomonadota</taxon>
        <taxon>Alphaproteobacteria</taxon>
        <taxon>Hyphomicrobiales</taxon>
        <taxon>Brucellaceae</taxon>
        <taxon>Brucella/Ochrobactrum group</taxon>
        <taxon>Brucella</taxon>
    </lineage>
</organism>
<keyword id="KW-0687">Ribonucleoprotein</keyword>
<keyword id="KW-0689">Ribosomal protein</keyword>
<keyword id="KW-0694">RNA-binding</keyword>
<keyword id="KW-0699">rRNA-binding</keyword>
<protein>
    <recommendedName>
        <fullName evidence="1">Large ribosomal subunit protein uL15</fullName>
    </recommendedName>
    <alternativeName>
        <fullName evidence="3">50S ribosomal protein L15</fullName>
    </alternativeName>
</protein>